<dbReference type="EC" id="2.1.1.192" evidence="1"/>
<dbReference type="EMBL" id="CP000746">
    <property type="protein sequence ID" value="ABR75376.1"/>
    <property type="molecule type" value="Genomic_DNA"/>
</dbReference>
<dbReference type="RefSeq" id="WP_012073752.1">
    <property type="nucleotide sequence ID" value="NC_009655.1"/>
</dbReference>
<dbReference type="SMR" id="A6VQX9"/>
<dbReference type="STRING" id="339671.Asuc_2030"/>
<dbReference type="KEGG" id="asu:Asuc_2030"/>
<dbReference type="eggNOG" id="COG0820">
    <property type="taxonomic scope" value="Bacteria"/>
</dbReference>
<dbReference type="HOGENOM" id="CLU_029101_0_0_6"/>
<dbReference type="OrthoDB" id="9793973at2"/>
<dbReference type="Proteomes" id="UP000001114">
    <property type="component" value="Chromosome"/>
</dbReference>
<dbReference type="GO" id="GO:0005737">
    <property type="term" value="C:cytoplasm"/>
    <property type="evidence" value="ECO:0007669"/>
    <property type="project" value="UniProtKB-SubCell"/>
</dbReference>
<dbReference type="GO" id="GO:0051539">
    <property type="term" value="F:4 iron, 4 sulfur cluster binding"/>
    <property type="evidence" value="ECO:0007669"/>
    <property type="project" value="UniProtKB-UniRule"/>
</dbReference>
<dbReference type="GO" id="GO:0046872">
    <property type="term" value="F:metal ion binding"/>
    <property type="evidence" value="ECO:0007669"/>
    <property type="project" value="UniProtKB-KW"/>
</dbReference>
<dbReference type="GO" id="GO:0070040">
    <property type="term" value="F:rRNA (adenine(2503)-C2-)-methyltransferase activity"/>
    <property type="evidence" value="ECO:0007669"/>
    <property type="project" value="UniProtKB-UniRule"/>
</dbReference>
<dbReference type="GO" id="GO:0019843">
    <property type="term" value="F:rRNA binding"/>
    <property type="evidence" value="ECO:0007669"/>
    <property type="project" value="UniProtKB-UniRule"/>
</dbReference>
<dbReference type="GO" id="GO:0002935">
    <property type="term" value="F:tRNA (adenine(37)-C2)-methyltransferase activity"/>
    <property type="evidence" value="ECO:0007669"/>
    <property type="project" value="UniProtKB-UniRule"/>
</dbReference>
<dbReference type="GO" id="GO:0000049">
    <property type="term" value="F:tRNA binding"/>
    <property type="evidence" value="ECO:0007669"/>
    <property type="project" value="UniProtKB-UniRule"/>
</dbReference>
<dbReference type="GO" id="GO:0070475">
    <property type="term" value="P:rRNA base methylation"/>
    <property type="evidence" value="ECO:0007669"/>
    <property type="project" value="UniProtKB-UniRule"/>
</dbReference>
<dbReference type="GO" id="GO:0030488">
    <property type="term" value="P:tRNA methylation"/>
    <property type="evidence" value="ECO:0007669"/>
    <property type="project" value="UniProtKB-UniRule"/>
</dbReference>
<dbReference type="CDD" id="cd01335">
    <property type="entry name" value="Radical_SAM"/>
    <property type="match status" value="1"/>
</dbReference>
<dbReference type="FunFam" id="1.10.150.530:FF:000003">
    <property type="entry name" value="Dual-specificity RNA methyltransferase RlmN"/>
    <property type="match status" value="1"/>
</dbReference>
<dbReference type="FunFam" id="3.20.20.70:FF:000008">
    <property type="entry name" value="Dual-specificity RNA methyltransferase RlmN"/>
    <property type="match status" value="1"/>
</dbReference>
<dbReference type="Gene3D" id="1.10.150.530">
    <property type="match status" value="1"/>
</dbReference>
<dbReference type="Gene3D" id="3.20.20.70">
    <property type="entry name" value="Aldolase class I"/>
    <property type="match status" value="1"/>
</dbReference>
<dbReference type="HAMAP" id="MF_01849">
    <property type="entry name" value="RNA_methyltr_RlmN"/>
    <property type="match status" value="1"/>
</dbReference>
<dbReference type="InterPro" id="IPR013785">
    <property type="entry name" value="Aldolase_TIM"/>
</dbReference>
<dbReference type="InterPro" id="IPR040072">
    <property type="entry name" value="Methyltransferase_A"/>
</dbReference>
<dbReference type="InterPro" id="IPR048641">
    <property type="entry name" value="RlmN_N"/>
</dbReference>
<dbReference type="InterPro" id="IPR027492">
    <property type="entry name" value="RNA_MTrfase_RlmN"/>
</dbReference>
<dbReference type="InterPro" id="IPR004383">
    <property type="entry name" value="rRNA_lsu_MTrfase_RlmN/Cfr"/>
</dbReference>
<dbReference type="InterPro" id="IPR007197">
    <property type="entry name" value="rSAM"/>
</dbReference>
<dbReference type="NCBIfam" id="NF008396">
    <property type="entry name" value="PRK11194.1"/>
    <property type="match status" value="1"/>
</dbReference>
<dbReference type="NCBIfam" id="TIGR00048">
    <property type="entry name" value="rRNA_mod_RlmN"/>
    <property type="match status" value="1"/>
</dbReference>
<dbReference type="PANTHER" id="PTHR30544">
    <property type="entry name" value="23S RRNA METHYLTRANSFERASE"/>
    <property type="match status" value="1"/>
</dbReference>
<dbReference type="PANTHER" id="PTHR30544:SF5">
    <property type="entry name" value="RADICAL SAM CORE DOMAIN-CONTAINING PROTEIN"/>
    <property type="match status" value="1"/>
</dbReference>
<dbReference type="Pfam" id="PF04055">
    <property type="entry name" value="Radical_SAM"/>
    <property type="match status" value="1"/>
</dbReference>
<dbReference type="Pfam" id="PF21016">
    <property type="entry name" value="RlmN_N"/>
    <property type="match status" value="1"/>
</dbReference>
<dbReference type="PIRSF" id="PIRSF006004">
    <property type="entry name" value="CHP00048"/>
    <property type="match status" value="1"/>
</dbReference>
<dbReference type="SFLD" id="SFLDF00275">
    <property type="entry name" value="adenosine_C2_methyltransferase"/>
    <property type="match status" value="1"/>
</dbReference>
<dbReference type="SFLD" id="SFLDS00029">
    <property type="entry name" value="Radical_SAM"/>
    <property type="match status" value="1"/>
</dbReference>
<dbReference type="SUPFAM" id="SSF102114">
    <property type="entry name" value="Radical SAM enzymes"/>
    <property type="match status" value="1"/>
</dbReference>
<dbReference type="PROSITE" id="PS51918">
    <property type="entry name" value="RADICAL_SAM"/>
    <property type="match status" value="1"/>
</dbReference>
<comment type="function">
    <text evidence="1">Specifically methylates position 2 of adenine 2503 in 23S rRNA and position 2 of adenine 37 in tRNAs. m2A2503 modification seems to play a crucial role in the proofreading step occurring at the peptidyl transferase center and thus would serve to optimize ribosomal fidelity.</text>
</comment>
<comment type="catalytic activity">
    <reaction evidence="1">
        <text>adenosine(2503) in 23S rRNA + 2 reduced [2Fe-2S]-[ferredoxin] + 2 S-adenosyl-L-methionine = 2-methyladenosine(2503) in 23S rRNA + 5'-deoxyadenosine + L-methionine + 2 oxidized [2Fe-2S]-[ferredoxin] + S-adenosyl-L-homocysteine</text>
        <dbReference type="Rhea" id="RHEA:42916"/>
        <dbReference type="Rhea" id="RHEA-COMP:10000"/>
        <dbReference type="Rhea" id="RHEA-COMP:10001"/>
        <dbReference type="Rhea" id="RHEA-COMP:10152"/>
        <dbReference type="Rhea" id="RHEA-COMP:10282"/>
        <dbReference type="ChEBI" id="CHEBI:17319"/>
        <dbReference type="ChEBI" id="CHEBI:33737"/>
        <dbReference type="ChEBI" id="CHEBI:33738"/>
        <dbReference type="ChEBI" id="CHEBI:57844"/>
        <dbReference type="ChEBI" id="CHEBI:57856"/>
        <dbReference type="ChEBI" id="CHEBI:59789"/>
        <dbReference type="ChEBI" id="CHEBI:74411"/>
        <dbReference type="ChEBI" id="CHEBI:74497"/>
        <dbReference type="EC" id="2.1.1.192"/>
    </reaction>
</comment>
<comment type="catalytic activity">
    <reaction evidence="1">
        <text>adenosine(37) in tRNA + 2 reduced [2Fe-2S]-[ferredoxin] + 2 S-adenosyl-L-methionine = 2-methyladenosine(37) in tRNA + 5'-deoxyadenosine + L-methionine + 2 oxidized [2Fe-2S]-[ferredoxin] + S-adenosyl-L-homocysteine</text>
        <dbReference type="Rhea" id="RHEA:43332"/>
        <dbReference type="Rhea" id="RHEA-COMP:10000"/>
        <dbReference type="Rhea" id="RHEA-COMP:10001"/>
        <dbReference type="Rhea" id="RHEA-COMP:10162"/>
        <dbReference type="Rhea" id="RHEA-COMP:10485"/>
        <dbReference type="ChEBI" id="CHEBI:17319"/>
        <dbReference type="ChEBI" id="CHEBI:33737"/>
        <dbReference type="ChEBI" id="CHEBI:33738"/>
        <dbReference type="ChEBI" id="CHEBI:57844"/>
        <dbReference type="ChEBI" id="CHEBI:57856"/>
        <dbReference type="ChEBI" id="CHEBI:59789"/>
        <dbReference type="ChEBI" id="CHEBI:74411"/>
        <dbReference type="ChEBI" id="CHEBI:74497"/>
        <dbReference type="EC" id="2.1.1.192"/>
    </reaction>
</comment>
<comment type="cofactor">
    <cofactor evidence="1">
        <name>[4Fe-4S] cluster</name>
        <dbReference type="ChEBI" id="CHEBI:49883"/>
    </cofactor>
    <text evidence="1">Binds 1 [4Fe-4S] cluster. The cluster is coordinated with 3 cysteines and an exchangeable S-adenosyl-L-methionine.</text>
</comment>
<comment type="subcellular location">
    <subcellularLocation>
        <location evidence="1">Cytoplasm</location>
    </subcellularLocation>
</comment>
<comment type="miscellaneous">
    <text evidence="1">Reaction proceeds by a ping-pong mechanism involving intermediate methylation of a conserved cysteine residue.</text>
</comment>
<comment type="similarity">
    <text evidence="1">Belongs to the radical SAM superfamily. RlmN family.</text>
</comment>
<keyword id="KW-0004">4Fe-4S</keyword>
<keyword id="KW-0963">Cytoplasm</keyword>
<keyword id="KW-1015">Disulfide bond</keyword>
<keyword id="KW-0408">Iron</keyword>
<keyword id="KW-0411">Iron-sulfur</keyword>
<keyword id="KW-0479">Metal-binding</keyword>
<keyword id="KW-0489">Methyltransferase</keyword>
<keyword id="KW-1185">Reference proteome</keyword>
<keyword id="KW-0698">rRNA processing</keyword>
<keyword id="KW-0949">S-adenosyl-L-methionine</keyword>
<keyword id="KW-0808">Transferase</keyword>
<keyword id="KW-0819">tRNA processing</keyword>
<name>RLMN_ACTSZ</name>
<reference key="1">
    <citation type="journal article" date="2010" name="BMC Genomics">
        <title>A genomic perspective on the potential of Actinobacillus succinogenes for industrial succinate production.</title>
        <authorList>
            <person name="McKinlay J.B."/>
            <person name="Laivenieks M."/>
            <person name="Schindler B.D."/>
            <person name="McKinlay A.A."/>
            <person name="Siddaramappa S."/>
            <person name="Challacombe J.F."/>
            <person name="Lowry S.R."/>
            <person name="Clum A."/>
            <person name="Lapidus A.L."/>
            <person name="Burkhart K.B."/>
            <person name="Harkins V."/>
            <person name="Vieille C."/>
        </authorList>
    </citation>
    <scope>NUCLEOTIDE SEQUENCE [LARGE SCALE GENOMIC DNA]</scope>
    <source>
        <strain>ATCC 55618 / DSM 22257 / CCUG 43843 / 130Z</strain>
    </source>
</reference>
<organism>
    <name type="scientific">Actinobacillus succinogenes (strain ATCC 55618 / DSM 22257 / CCUG 43843 / 130Z)</name>
    <dbReference type="NCBI Taxonomy" id="339671"/>
    <lineage>
        <taxon>Bacteria</taxon>
        <taxon>Pseudomonadati</taxon>
        <taxon>Pseudomonadota</taxon>
        <taxon>Gammaproteobacteria</taxon>
        <taxon>Pasteurellales</taxon>
        <taxon>Pasteurellaceae</taxon>
        <taxon>Actinobacillus</taxon>
    </lineage>
</organism>
<proteinExistence type="inferred from homology"/>
<protein>
    <recommendedName>
        <fullName evidence="1">Dual-specificity RNA methyltransferase RlmN</fullName>
        <ecNumber evidence="1">2.1.1.192</ecNumber>
    </recommendedName>
    <alternativeName>
        <fullName evidence="1">23S rRNA (adenine(2503)-C(2))-methyltransferase</fullName>
    </alternativeName>
    <alternativeName>
        <fullName evidence="1">23S rRNA m2A2503 methyltransferase</fullName>
    </alternativeName>
    <alternativeName>
        <fullName evidence="1">Ribosomal RNA large subunit methyltransferase N</fullName>
    </alternativeName>
    <alternativeName>
        <fullName evidence="1">tRNA (adenine(37)-C(2))-methyltransferase</fullName>
    </alternativeName>
    <alternativeName>
        <fullName evidence="1">tRNA m2A37 methyltransferase</fullName>
    </alternativeName>
</protein>
<feature type="chain" id="PRO_0000350003" description="Dual-specificity RNA methyltransferase RlmN">
    <location>
        <begin position="1"/>
        <end position="371"/>
    </location>
</feature>
<feature type="domain" description="Radical SAM core" evidence="2">
    <location>
        <begin position="98"/>
        <end position="337"/>
    </location>
</feature>
<feature type="active site" description="Proton acceptor" evidence="1">
    <location>
        <position position="92"/>
    </location>
</feature>
<feature type="active site" description="S-methylcysteine intermediate" evidence="1">
    <location>
        <position position="342"/>
    </location>
</feature>
<feature type="binding site" evidence="1">
    <location>
        <position position="112"/>
    </location>
    <ligand>
        <name>[4Fe-4S] cluster</name>
        <dbReference type="ChEBI" id="CHEBI:49883"/>
        <note>4Fe-4S-S-AdoMet</note>
    </ligand>
</feature>
<feature type="binding site" evidence="1">
    <location>
        <position position="116"/>
    </location>
    <ligand>
        <name>[4Fe-4S] cluster</name>
        <dbReference type="ChEBI" id="CHEBI:49883"/>
        <note>4Fe-4S-S-AdoMet</note>
    </ligand>
</feature>
<feature type="binding site" evidence="1">
    <location>
        <position position="119"/>
    </location>
    <ligand>
        <name>[4Fe-4S] cluster</name>
        <dbReference type="ChEBI" id="CHEBI:49883"/>
        <note>4Fe-4S-S-AdoMet</note>
    </ligand>
</feature>
<feature type="binding site" evidence="1">
    <location>
        <begin position="166"/>
        <end position="167"/>
    </location>
    <ligand>
        <name>S-adenosyl-L-methionine</name>
        <dbReference type="ChEBI" id="CHEBI:59789"/>
    </ligand>
</feature>
<feature type="binding site" evidence="1">
    <location>
        <position position="198"/>
    </location>
    <ligand>
        <name>S-adenosyl-L-methionine</name>
        <dbReference type="ChEBI" id="CHEBI:59789"/>
    </ligand>
</feature>
<feature type="binding site" evidence="1">
    <location>
        <begin position="220"/>
        <end position="222"/>
    </location>
    <ligand>
        <name>S-adenosyl-L-methionine</name>
        <dbReference type="ChEBI" id="CHEBI:59789"/>
    </ligand>
</feature>
<feature type="binding site" evidence="1">
    <location>
        <position position="299"/>
    </location>
    <ligand>
        <name>S-adenosyl-L-methionine</name>
        <dbReference type="ChEBI" id="CHEBI:59789"/>
    </ligand>
</feature>
<feature type="disulfide bond" description="(transient)" evidence="1">
    <location>
        <begin position="105"/>
        <end position="342"/>
    </location>
</feature>
<accession>A6VQX9</accession>
<gene>
    <name evidence="1" type="primary">rlmN</name>
    <name type="ordered locus">Asuc_2030</name>
</gene>
<sequence>MSEKINLMDLTRQQMREFFKELGEKPFRADQLVKWIYHFGEDNFDNMTNINKKLREKLKQVAEIKAPEVAVEQRSSDGTIKWAMQVGDQQVETVYIPEADRATLCVSSQVGCALACTFCSTAQQGFNRNLTVSEIIGQVWRASKIIGNFGVTGIRPITNVVMMGMGEPLLNMANVVPAMEIMLDDFAYGLSKRRVTISTSGVVPALDKLPEMIDVALAISLHAPNDELRDEIVPINKKYNIKMLMDSVNRYLSVSNANHGKVTIEYVLLDHVNDGTEHAHQLADVLKNTPCKINLIPWNPFPEAPYAKSSNSRVDRFQKTLMEYGFTVTVRKTRGDDIDAACGQLAGDVIDRTKRTAQKKQFGQVIGVVNQ</sequence>
<evidence type="ECO:0000255" key="1">
    <source>
        <dbReference type="HAMAP-Rule" id="MF_01849"/>
    </source>
</evidence>
<evidence type="ECO:0000255" key="2">
    <source>
        <dbReference type="PROSITE-ProRule" id="PRU01266"/>
    </source>
</evidence>